<dbReference type="EMBL" id="BA000026">
    <property type="protein sequence ID" value="BAC44799.1"/>
    <property type="status" value="ALT_INIT"/>
    <property type="molecule type" value="Genomic_DNA"/>
</dbReference>
<dbReference type="RefSeq" id="WP_044891322.1">
    <property type="nucleotide sequence ID" value="NC_004432.1"/>
</dbReference>
<dbReference type="SMR" id="Q8EUB7"/>
<dbReference type="FunCoup" id="Q8EUB7">
    <property type="interactions" value="240"/>
</dbReference>
<dbReference type="STRING" id="272633.gene:10732133"/>
<dbReference type="KEGG" id="mpe:MYPE10130"/>
<dbReference type="eggNOG" id="COG0185">
    <property type="taxonomic scope" value="Bacteria"/>
</dbReference>
<dbReference type="HOGENOM" id="CLU_144911_3_0_14"/>
<dbReference type="InParanoid" id="Q8EUB7"/>
<dbReference type="Proteomes" id="UP000002522">
    <property type="component" value="Chromosome"/>
</dbReference>
<dbReference type="GO" id="GO:0005737">
    <property type="term" value="C:cytoplasm"/>
    <property type="evidence" value="ECO:0007669"/>
    <property type="project" value="UniProtKB-ARBA"/>
</dbReference>
<dbReference type="GO" id="GO:0015935">
    <property type="term" value="C:small ribosomal subunit"/>
    <property type="evidence" value="ECO:0007669"/>
    <property type="project" value="InterPro"/>
</dbReference>
<dbReference type="GO" id="GO:0019843">
    <property type="term" value="F:rRNA binding"/>
    <property type="evidence" value="ECO:0007669"/>
    <property type="project" value="UniProtKB-UniRule"/>
</dbReference>
<dbReference type="GO" id="GO:0003735">
    <property type="term" value="F:structural constituent of ribosome"/>
    <property type="evidence" value="ECO:0007669"/>
    <property type="project" value="InterPro"/>
</dbReference>
<dbReference type="GO" id="GO:0000028">
    <property type="term" value="P:ribosomal small subunit assembly"/>
    <property type="evidence" value="ECO:0007669"/>
    <property type="project" value="TreeGrafter"/>
</dbReference>
<dbReference type="GO" id="GO:0006412">
    <property type="term" value="P:translation"/>
    <property type="evidence" value="ECO:0007669"/>
    <property type="project" value="UniProtKB-UniRule"/>
</dbReference>
<dbReference type="FunFam" id="3.30.860.10:FF:000001">
    <property type="entry name" value="30S ribosomal protein S19"/>
    <property type="match status" value="1"/>
</dbReference>
<dbReference type="Gene3D" id="3.30.860.10">
    <property type="entry name" value="30s Ribosomal Protein S19, Chain A"/>
    <property type="match status" value="1"/>
</dbReference>
<dbReference type="HAMAP" id="MF_00531">
    <property type="entry name" value="Ribosomal_uS19"/>
    <property type="match status" value="1"/>
</dbReference>
<dbReference type="InterPro" id="IPR002222">
    <property type="entry name" value="Ribosomal_uS19"/>
</dbReference>
<dbReference type="InterPro" id="IPR005732">
    <property type="entry name" value="Ribosomal_uS19_bac-type"/>
</dbReference>
<dbReference type="InterPro" id="IPR020934">
    <property type="entry name" value="Ribosomal_uS19_CS"/>
</dbReference>
<dbReference type="InterPro" id="IPR023575">
    <property type="entry name" value="Ribosomal_uS19_SF"/>
</dbReference>
<dbReference type="NCBIfam" id="TIGR01050">
    <property type="entry name" value="rpsS_bact"/>
    <property type="match status" value="1"/>
</dbReference>
<dbReference type="PANTHER" id="PTHR11880">
    <property type="entry name" value="RIBOSOMAL PROTEIN S19P FAMILY MEMBER"/>
    <property type="match status" value="1"/>
</dbReference>
<dbReference type="PANTHER" id="PTHR11880:SF8">
    <property type="entry name" value="SMALL RIBOSOMAL SUBUNIT PROTEIN US19M"/>
    <property type="match status" value="1"/>
</dbReference>
<dbReference type="Pfam" id="PF00203">
    <property type="entry name" value="Ribosomal_S19"/>
    <property type="match status" value="1"/>
</dbReference>
<dbReference type="PIRSF" id="PIRSF002144">
    <property type="entry name" value="Ribosomal_S19"/>
    <property type="match status" value="1"/>
</dbReference>
<dbReference type="PRINTS" id="PR00975">
    <property type="entry name" value="RIBOSOMALS19"/>
</dbReference>
<dbReference type="SUPFAM" id="SSF54570">
    <property type="entry name" value="Ribosomal protein S19"/>
    <property type="match status" value="1"/>
</dbReference>
<dbReference type="PROSITE" id="PS00323">
    <property type="entry name" value="RIBOSOMAL_S19"/>
    <property type="match status" value="1"/>
</dbReference>
<proteinExistence type="inferred from homology"/>
<comment type="function">
    <text evidence="1">Protein S19 forms a complex with S13 that binds strongly to the 16S ribosomal RNA.</text>
</comment>
<comment type="similarity">
    <text evidence="1">Belongs to the universal ribosomal protein uS19 family.</text>
</comment>
<comment type="sequence caution" evidence="2">
    <conflict type="erroneous initiation">
        <sequence resource="EMBL-CDS" id="BAC44799"/>
    </conflict>
</comment>
<feature type="chain" id="PRO_0000354295" description="Small ribosomal subunit protein uS19">
    <location>
        <begin position="1"/>
        <end position="92"/>
    </location>
</feature>
<name>RS19_MALP2</name>
<evidence type="ECO:0000255" key="1">
    <source>
        <dbReference type="HAMAP-Rule" id="MF_00531"/>
    </source>
</evidence>
<evidence type="ECO:0000305" key="2"/>
<gene>
    <name evidence="1" type="primary">rpsS</name>
    <name type="ordered locus">MYPE10130</name>
</gene>
<reference key="1">
    <citation type="journal article" date="2002" name="Nucleic Acids Res.">
        <title>The complete genomic sequence of Mycoplasma penetrans, an intracellular bacterial pathogen in humans.</title>
        <authorList>
            <person name="Sasaki Y."/>
            <person name="Ishikawa J."/>
            <person name="Yamashita A."/>
            <person name="Oshima K."/>
            <person name="Kenri T."/>
            <person name="Furuya K."/>
            <person name="Yoshino C."/>
            <person name="Horino A."/>
            <person name="Shiba T."/>
            <person name="Sasaki T."/>
            <person name="Hattori M."/>
        </authorList>
    </citation>
    <scope>NUCLEOTIDE SEQUENCE [LARGE SCALE GENOMIC DNA]</scope>
    <source>
        <strain>HF-2</strain>
    </source>
</reference>
<accession>Q8EUB7</accession>
<keyword id="KW-1185">Reference proteome</keyword>
<keyword id="KW-0687">Ribonucleoprotein</keyword>
<keyword id="KW-0689">Ribosomal protein</keyword>
<keyword id="KW-0694">RNA-binding</keyword>
<keyword id="KW-0699">rRNA-binding</keyword>
<sequence>MSRSSKKGPYIEPSLMKKVQAMKAADKKKPIKTWSRRSTIFPDFVGLNFEVHNGKSFVNVYVTEDMIGHKLGEFAQTRTFKQHTSNRKDLAK</sequence>
<organism>
    <name type="scientific">Malacoplasma penetrans (strain HF-2)</name>
    <name type="common">Mycoplasma penetrans</name>
    <dbReference type="NCBI Taxonomy" id="272633"/>
    <lineage>
        <taxon>Bacteria</taxon>
        <taxon>Bacillati</taxon>
        <taxon>Mycoplasmatota</taxon>
        <taxon>Mycoplasmoidales</taxon>
        <taxon>Mycoplasmoidaceae</taxon>
        <taxon>Malacoplasma</taxon>
    </lineage>
</organism>
<protein>
    <recommendedName>
        <fullName evidence="1">Small ribosomal subunit protein uS19</fullName>
    </recommendedName>
    <alternativeName>
        <fullName evidence="2">30S ribosomal protein S19</fullName>
    </alternativeName>
</protein>